<keyword id="KW-0012">Acyltransferase</keyword>
<keyword id="KW-1185">Reference proteome</keyword>
<keyword id="KW-0808">Transferase</keyword>
<gene>
    <name evidence="3 4" type="primary">phnO</name>
    <name evidence="4" type="ordered locus">STM4287</name>
</gene>
<accession>Q8ZKE6</accession>
<dbReference type="EC" id="2.3.1.280" evidence="2"/>
<dbReference type="EMBL" id="AE006468">
    <property type="protein sequence ID" value="AAL23111.1"/>
    <property type="molecule type" value="Genomic_DNA"/>
</dbReference>
<dbReference type="RefSeq" id="NP_463152.3">
    <property type="nucleotide sequence ID" value="NC_003197.2"/>
</dbReference>
<dbReference type="RefSeq" id="WP_000602438.1">
    <property type="nucleotide sequence ID" value="NC_003197.2"/>
</dbReference>
<dbReference type="SMR" id="Q8ZKE6"/>
<dbReference type="STRING" id="99287.STM4287"/>
<dbReference type="PaxDb" id="99287-STM4287"/>
<dbReference type="GeneID" id="1255813"/>
<dbReference type="KEGG" id="stm:STM4287"/>
<dbReference type="HOGENOM" id="CLU_013985_34_6_6"/>
<dbReference type="PhylomeDB" id="Q8ZKE6"/>
<dbReference type="BioCyc" id="SENT99287:STM4287-MONOMER"/>
<dbReference type="BRENDA" id="2.3.1.280">
    <property type="organism ID" value="5542"/>
</dbReference>
<dbReference type="Proteomes" id="UP000001014">
    <property type="component" value="Chromosome"/>
</dbReference>
<dbReference type="GO" id="GO:0016747">
    <property type="term" value="F:acyltransferase activity, transferring groups other than amino-acyl groups"/>
    <property type="evidence" value="ECO:0007669"/>
    <property type="project" value="InterPro"/>
</dbReference>
<dbReference type="CDD" id="cd04301">
    <property type="entry name" value="NAT_SF"/>
    <property type="match status" value="1"/>
</dbReference>
<dbReference type="Gene3D" id="3.40.630.30">
    <property type="match status" value="1"/>
</dbReference>
<dbReference type="InterPro" id="IPR016181">
    <property type="entry name" value="Acyl_CoA_acyltransferase"/>
</dbReference>
<dbReference type="InterPro" id="IPR050832">
    <property type="entry name" value="Bact_Acetyltransf"/>
</dbReference>
<dbReference type="InterPro" id="IPR000182">
    <property type="entry name" value="GNAT_dom"/>
</dbReference>
<dbReference type="NCBIfam" id="NF007530">
    <property type="entry name" value="PRK10146.1"/>
    <property type="match status" value="1"/>
</dbReference>
<dbReference type="PANTHER" id="PTHR43877:SF2">
    <property type="entry name" value="AMINOALKYLPHOSPHONATE N-ACETYLTRANSFERASE-RELATED"/>
    <property type="match status" value="1"/>
</dbReference>
<dbReference type="PANTHER" id="PTHR43877">
    <property type="entry name" value="AMINOALKYLPHOSPHONATE N-ACETYLTRANSFERASE-RELATED-RELATED"/>
    <property type="match status" value="1"/>
</dbReference>
<dbReference type="Pfam" id="PF00583">
    <property type="entry name" value="Acetyltransf_1"/>
    <property type="match status" value="1"/>
</dbReference>
<dbReference type="SUPFAM" id="SSF55729">
    <property type="entry name" value="Acyl-CoA N-acyltransferases (Nat)"/>
    <property type="match status" value="1"/>
</dbReference>
<dbReference type="PROSITE" id="PS51186">
    <property type="entry name" value="GNAT"/>
    <property type="match status" value="1"/>
</dbReference>
<reference key="1">
    <citation type="journal article" date="2001" name="Nature">
        <title>Complete genome sequence of Salmonella enterica serovar Typhimurium LT2.</title>
        <authorList>
            <person name="McClelland M."/>
            <person name="Sanderson K.E."/>
            <person name="Spieth J."/>
            <person name="Clifton S.W."/>
            <person name="Latreille P."/>
            <person name="Courtney L."/>
            <person name="Porwollik S."/>
            <person name="Ali J."/>
            <person name="Dante M."/>
            <person name="Du F."/>
            <person name="Hou S."/>
            <person name="Layman D."/>
            <person name="Leonard S."/>
            <person name="Nguyen C."/>
            <person name="Scott K."/>
            <person name="Holmes A."/>
            <person name="Grewal N."/>
            <person name="Mulvaney E."/>
            <person name="Ryan E."/>
            <person name="Sun H."/>
            <person name="Florea L."/>
            <person name="Miller W."/>
            <person name="Stoneking T."/>
            <person name="Nhan M."/>
            <person name="Waterston R."/>
            <person name="Wilson R.K."/>
        </authorList>
    </citation>
    <scope>NUCLEOTIDE SEQUENCE [LARGE SCALE GENOMIC DNA]</scope>
    <source>
        <strain>LT2 / SGSC1412 / ATCC 700720</strain>
    </source>
</reference>
<reference key="2">
    <citation type="journal article" date="2006" name="Biochemistry">
        <title>Functional annotation and kinetic characterization of PhnO from Salmonella enterica.</title>
        <authorList>
            <person name="Errey J.C."/>
            <person name="Blanchard J.S."/>
        </authorList>
    </citation>
    <scope>FUNCTION</scope>
    <scope>CATALYTIC ACTIVITY</scope>
    <scope>COFACTOR</scope>
    <scope>SUBSTRATE SPECIFICITY</scope>
    <scope>BIOPHYSICOCHEMICAL PROPERTIES</scope>
    <scope>REACTION MECHANISM</scope>
    <scope>MASS SPECTROMETRY</scope>
    <scope>CLEAVAGE OF INITIATOR METHIONINE</scope>
    <scope>SUBUNIT</scope>
    <source>
        <strain>LT2 / SGSC1412 / ATCC 700720</strain>
    </source>
</reference>
<proteinExistence type="evidence at protein level"/>
<evidence type="ECO:0000255" key="1">
    <source>
        <dbReference type="PROSITE-ProRule" id="PRU00532"/>
    </source>
</evidence>
<evidence type="ECO:0000269" key="2">
    <source>
    </source>
</evidence>
<evidence type="ECO:0000303" key="3">
    <source>
    </source>
</evidence>
<evidence type="ECO:0000312" key="4">
    <source>
        <dbReference type="EMBL" id="AAL23111.1"/>
    </source>
</evidence>
<protein>
    <recommendedName>
        <fullName evidence="3">Aminoalkylphosphonate N-acetyltransferase</fullName>
        <ecNumber evidence="2">2.3.1.280</ecNumber>
    </recommendedName>
</protein>
<comment type="function">
    <text evidence="2">Aminoalkylphosphonate N-acetyltransferase which is able to acetylate a range of aminoalkylphosphonic acids, including (S)-1-aminoethylphosphonate ((S)-1AEP) and 2-aminoethylphosphonate, using acetyl-CoA as acetyl donor. Its physiological role in S.typhimurium is unclear. However, by acetylating (S)-1AEP, PhnO would protect against the deleterious effects of (S)-1AEP, a structural analog of D-alanine that has antibacterial properties.</text>
</comment>
<comment type="catalytic activity">
    <reaction evidence="2">
        <text>aminomethylphosphonate + acetyl-CoA = 2-N-acetamidomethylphosphonate + CoA</text>
        <dbReference type="Rhea" id="RHEA:51428"/>
        <dbReference type="ChEBI" id="CHEBI:57287"/>
        <dbReference type="ChEBI" id="CHEBI:57288"/>
        <dbReference type="ChEBI" id="CHEBI:133674"/>
        <dbReference type="ChEBI" id="CHEBI:134093"/>
        <dbReference type="EC" id="2.3.1.280"/>
    </reaction>
</comment>
<comment type="catalytic activity">
    <reaction evidence="2">
        <text>(S)-1-aminoethylphosphonate + acetyl-CoA = [(1S)-1-acetamidoethyl]phosphonate + CoA</text>
        <dbReference type="Rhea" id="RHEA:51432"/>
        <dbReference type="ChEBI" id="CHEBI:57287"/>
        <dbReference type="ChEBI" id="CHEBI:57288"/>
        <dbReference type="ChEBI" id="CHEBI:134098"/>
        <dbReference type="ChEBI" id="CHEBI:134099"/>
    </reaction>
</comment>
<comment type="cofactor">
    <cofactor evidence="2">
        <name>a divalent metal cation</name>
        <dbReference type="ChEBI" id="CHEBI:60240"/>
    </cofactor>
    <text evidence="2">Requires a divalent metal ion for activity. In vitro, exhibits a preference for Ni(2+) followed by Mn(2+) and very poor activity with Mg(2+). However, it is unclear what the physiologically relevant metal ion is.</text>
</comment>
<comment type="biophysicochemical properties">
    <kinetics>
        <KM evidence="2">0.06 mM for acetyl-CoA (in the presence of Ni(2+))</KM>
        <KM evidence="2">0.07 mM for propionyl-CoA (in the presence of Ni(2+))</KM>
        <KM evidence="2">0.05 mM for malonyl-CoA (in the presence of Ni(2+))</KM>
        <KM evidence="2">1.7 mM for aminomethylphosphonate (in the presence of Ni(2+))</KM>
        <KM evidence="2">1.8 mM for 2-aminoethylphosphonate (in the presence of Ni(2+))</KM>
        <KM evidence="2">4 mM for 3-aminopropylphosphonate (in the presence of Ni(2+))</KM>
        <KM evidence="2">13 mM for 4-aminobutylphosphonate (in the presence of Ni(2+))</KM>
        <KM evidence="2">0.17 mM for (S)-1-aminoethylphosphonate (in the presence of Ni(2+))</KM>
        <KM evidence="2">0.3 mM for (S)-1-aminoethylphosphonate (in the presence of Mn(2+))</KM>
        <KM evidence="2">0.28 mM for (S)-1-aminoethylphosphonate (in the presence of Co(2+))</KM>
        <KM evidence="2">2 mM for (S)-1-aminoethylphosphonate (in the presence of Mg(2+))</KM>
        <KM evidence="2">4.1 mM for 1-aminopropylphosphonate (in the presence of Ni(2+))</KM>
        <KM evidence="2">12.5 mM for 1-aminobutylphosphonate (in the presence of Ni(2+))</KM>
        <KM evidence="2">18.9 mM for 2-aminoethanesulfonate (in the presence of Ni(2+))</KM>
        <KM evidence="2">16.4 mM for 2-aminoethanesulfinate (in the presence of Ni(2+))</KM>
        <text evidence="2">kcat is 13.1 sec(-1) for the acetylation of (S)-1AEP. kcat is 14.7 sec(-1) for the propionylation of (S)-1AEP. kcat is 0.4 sec(-1) for the malonylation of (S)-1AEP. kcat is 7.0 sec(-1) for the acetylation of aminomethylphosphonate. kcat is 9.0 sec(-1) for the acetylation of 2-aminoethylphosphonate. kcat is 5.4 sec(-1) for the acetylation of 3-aminopropylphosphonate. kcat is 0.5 sec(-1) for the acetylation of 4-aminobutylphosphonate. kcat is 7.4 sec(-1) for the acetylation of 1-aminopropylphosphonate. kcat is 1.0 sec(-1) for the acetylation of 1-aminobutylphosphonate. kcat is 14.8 sec(-1) for the acetylation of 2-aminoethanesulfonate. kcat is 20 sec(-1) for the acetylation of 2-aminoethanesulfinate (in the presence of Ni(2+)).</text>
    </kinetics>
</comment>
<comment type="subunit">
    <text evidence="2">Homodimer.</text>
</comment>
<comment type="mass spectrometry"/>
<comment type="miscellaneous">
    <text evidence="2">Reaction proceeds via an ordered, sequential kinetic mechanism with AcCoA binding first followed by aminoalkylphosphonate.</text>
</comment>
<name>PHNO_SALTY</name>
<sequence>MILMRRREDVMPVCELRHATTEDTDSVYALICELLKNELDYQAFRDGFAANLLDPNVHYRLALRNGEVVGMISLHMQFHLHHANWIGEIQELVVLPPMRGQKIGSQLLAWAEEEARQAGAELTELSTNIKRRDAHRFYLREGYKQSHFRFTKAL</sequence>
<feature type="initiator methionine" description="Removed" evidence="2">
    <location>
        <position position="1"/>
    </location>
</feature>
<feature type="chain" id="PRO_0000437189" description="Aminoalkylphosphonate N-acetyltransferase">
    <location>
        <begin position="2"/>
        <end position="154"/>
    </location>
</feature>
<feature type="domain" description="N-acetyltransferase" evidence="1">
    <location>
        <begin position="14"/>
        <end position="154"/>
    </location>
</feature>
<organism>
    <name type="scientific">Salmonella typhimurium (strain LT2 / SGSC1412 / ATCC 700720)</name>
    <dbReference type="NCBI Taxonomy" id="99287"/>
    <lineage>
        <taxon>Bacteria</taxon>
        <taxon>Pseudomonadati</taxon>
        <taxon>Pseudomonadota</taxon>
        <taxon>Gammaproteobacteria</taxon>
        <taxon>Enterobacterales</taxon>
        <taxon>Enterobacteriaceae</taxon>
        <taxon>Salmonella</taxon>
    </lineage>
</organism>